<feature type="chain" id="PRO_0000050304" description="Minor myo-inositol transporter IolF">
    <location>
        <begin position="1"/>
        <end position="438"/>
    </location>
</feature>
<feature type="transmembrane region" description="Helical" evidence="1">
    <location>
        <begin position="15"/>
        <end position="35"/>
    </location>
</feature>
<feature type="transmembrane region" description="Helical" evidence="1">
    <location>
        <begin position="49"/>
        <end position="69"/>
    </location>
</feature>
<feature type="transmembrane region" description="Helical" evidence="1">
    <location>
        <begin position="86"/>
        <end position="106"/>
    </location>
</feature>
<feature type="transmembrane region" description="Helical" evidence="1">
    <location>
        <begin position="108"/>
        <end position="128"/>
    </location>
</feature>
<feature type="transmembrane region" description="Helical" evidence="1">
    <location>
        <begin position="147"/>
        <end position="167"/>
    </location>
</feature>
<feature type="transmembrane region" description="Helical" evidence="1">
    <location>
        <begin position="171"/>
        <end position="191"/>
    </location>
</feature>
<feature type="transmembrane region" description="Helical" evidence="1">
    <location>
        <begin position="230"/>
        <end position="250"/>
    </location>
</feature>
<feature type="transmembrane region" description="Helical" evidence="1">
    <location>
        <begin position="268"/>
        <end position="288"/>
    </location>
</feature>
<feature type="transmembrane region" description="Helical" evidence="1">
    <location>
        <begin position="295"/>
        <end position="312"/>
    </location>
</feature>
<feature type="transmembrane region" description="Helical" evidence="1">
    <location>
        <begin position="317"/>
        <end position="334"/>
    </location>
</feature>
<feature type="transmembrane region" description="Helical" evidence="1">
    <location>
        <begin position="359"/>
        <end position="379"/>
    </location>
</feature>
<feature type="transmembrane region" description="Helical" evidence="1">
    <location>
        <begin position="387"/>
        <end position="407"/>
    </location>
</feature>
<feature type="sequence conflict" description="In Ref. 1; BAA03295 and 3; M76431." evidence="3" ref="1 3">
    <original>YRASAQGLMFFL</original>
    <variation>LIRCFRTRTDVFP</variation>
    <location>
        <begin position="352"/>
        <end position="363"/>
    </location>
</feature>
<evidence type="ECO:0000255" key="1"/>
<evidence type="ECO:0000269" key="2">
    <source>
    </source>
</evidence>
<evidence type="ECO:0000305" key="3"/>
<organism>
    <name type="scientific">Bacillus subtilis (strain 168)</name>
    <dbReference type="NCBI Taxonomy" id="224308"/>
    <lineage>
        <taxon>Bacteria</taxon>
        <taxon>Bacillati</taxon>
        <taxon>Bacillota</taxon>
        <taxon>Bacilli</taxon>
        <taxon>Bacillales</taxon>
        <taxon>Bacillaceae</taxon>
        <taxon>Bacillus</taxon>
    </lineage>
</organism>
<gene>
    <name type="primary">iolF</name>
    <name type="synonym">yxdF</name>
    <name type="ordered locus">BSU39710</name>
    <name type="ORF">E83F</name>
</gene>
<reference key="1">
    <citation type="journal article" date="1994" name="Microbiology">
        <title>Cloning and nucleotide sequencing of a 15 kb region of the Bacillus subtilis genome containing the iol operon.</title>
        <authorList>
            <person name="Yoshida K."/>
            <person name="Sano H."/>
            <person name="Miwa Y."/>
            <person name="Ogasawara N."/>
            <person name="Fujita Y."/>
        </authorList>
    </citation>
    <scope>NUCLEOTIDE SEQUENCE [GENOMIC DNA]</scope>
    <source>
        <strain>168 / BGSC1A1</strain>
    </source>
</reference>
<reference key="2">
    <citation type="journal article" date="1997" name="Nature">
        <title>The complete genome sequence of the Gram-positive bacterium Bacillus subtilis.</title>
        <authorList>
            <person name="Kunst F."/>
            <person name="Ogasawara N."/>
            <person name="Moszer I."/>
            <person name="Albertini A.M."/>
            <person name="Alloni G."/>
            <person name="Azevedo V."/>
            <person name="Bertero M.G."/>
            <person name="Bessieres P."/>
            <person name="Bolotin A."/>
            <person name="Borchert S."/>
            <person name="Borriss R."/>
            <person name="Boursier L."/>
            <person name="Brans A."/>
            <person name="Braun M."/>
            <person name="Brignell S.C."/>
            <person name="Bron S."/>
            <person name="Brouillet S."/>
            <person name="Bruschi C.V."/>
            <person name="Caldwell B."/>
            <person name="Capuano V."/>
            <person name="Carter N.M."/>
            <person name="Choi S.-K."/>
            <person name="Codani J.-J."/>
            <person name="Connerton I.F."/>
            <person name="Cummings N.J."/>
            <person name="Daniel R.A."/>
            <person name="Denizot F."/>
            <person name="Devine K.M."/>
            <person name="Duesterhoeft A."/>
            <person name="Ehrlich S.D."/>
            <person name="Emmerson P.T."/>
            <person name="Entian K.-D."/>
            <person name="Errington J."/>
            <person name="Fabret C."/>
            <person name="Ferrari E."/>
            <person name="Foulger D."/>
            <person name="Fritz C."/>
            <person name="Fujita M."/>
            <person name="Fujita Y."/>
            <person name="Fuma S."/>
            <person name="Galizzi A."/>
            <person name="Galleron N."/>
            <person name="Ghim S.-Y."/>
            <person name="Glaser P."/>
            <person name="Goffeau A."/>
            <person name="Golightly E.J."/>
            <person name="Grandi G."/>
            <person name="Guiseppi G."/>
            <person name="Guy B.J."/>
            <person name="Haga K."/>
            <person name="Haiech J."/>
            <person name="Harwood C.R."/>
            <person name="Henaut A."/>
            <person name="Hilbert H."/>
            <person name="Holsappel S."/>
            <person name="Hosono S."/>
            <person name="Hullo M.-F."/>
            <person name="Itaya M."/>
            <person name="Jones L.-M."/>
            <person name="Joris B."/>
            <person name="Karamata D."/>
            <person name="Kasahara Y."/>
            <person name="Klaerr-Blanchard M."/>
            <person name="Klein C."/>
            <person name="Kobayashi Y."/>
            <person name="Koetter P."/>
            <person name="Koningstein G."/>
            <person name="Krogh S."/>
            <person name="Kumano M."/>
            <person name="Kurita K."/>
            <person name="Lapidus A."/>
            <person name="Lardinois S."/>
            <person name="Lauber J."/>
            <person name="Lazarevic V."/>
            <person name="Lee S.-M."/>
            <person name="Levine A."/>
            <person name="Liu H."/>
            <person name="Masuda S."/>
            <person name="Mauel C."/>
            <person name="Medigue C."/>
            <person name="Medina N."/>
            <person name="Mellado R.P."/>
            <person name="Mizuno M."/>
            <person name="Moestl D."/>
            <person name="Nakai S."/>
            <person name="Noback M."/>
            <person name="Noone D."/>
            <person name="O'Reilly M."/>
            <person name="Ogawa K."/>
            <person name="Ogiwara A."/>
            <person name="Oudega B."/>
            <person name="Park S.-H."/>
            <person name="Parro V."/>
            <person name="Pohl T.M."/>
            <person name="Portetelle D."/>
            <person name="Porwollik S."/>
            <person name="Prescott A.M."/>
            <person name="Presecan E."/>
            <person name="Pujic P."/>
            <person name="Purnelle B."/>
            <person name="Rapoport G."/>
            <person name="Rey M."/>
            <person name="Reynolds S."/>
            <person name="Rieger M."/>
            <person name="Rivolta C."/>
            <person name="Rocha E."/>
            <person name="Roche B."/>
            <person name="Rose M."/>
            <person name="Sadaie Y."/>
            <person name="Sato T."/>
            <person name="Scanlan E."/>
            <person name="Schleich S."/>
            <person name="Schroeter R."/>
            <person name="Scoffone F."/>
            <person name="Sekiguchi J."/>
            <person name="Sekowska A."/>
            <person name="Seror S.J."/>
            <person name="Serror P."/>
            <person name="Shin B.-S."/>
            <person name="Soldo B."/>
            <person name="Sorokin A."/>
            <person name="Tacconi E."/>
            <person name="Takagi T."/>
            <person name="Takahashi H."/>
            <person name="Takemaru K."/>
            <person name="Takeuchi M."/>
            <person name="Tamakoshi A."/>
            <person name="Tanaka T."/>
            <person name="Terpstra P."/>
            <person name="Tognoni A."/>
            <person name="Tosato V."/>
            <person name="Uchiyama S."/>
            <person name="Vandenbol M."/>
            <person name="Vannier F."/>
            <person name="Vassarotti A."/>
            <person name="Viari A."/>
            <person name="Wambutt R."/>
            <person name="Wedler E."/>
            <person name="Wedler H."/>
            <person name="Weitzenegger T."/>
            <person name="Winters P."/>
            <person name="Wipat A."/>
            <person name="Yamamoto H."/>
            <person name="Yamane K."/>
            <person name="Yasumoto K."/>
            <person name="Yata K."/>
            <person name="Yoshida K."/>
            <person name="Yoshikawa H.-F."/>
            <person name="Zumstein E."/>
            <person name="Yoshikawa H."/>
            <person name="Danchin A."/>
        </authorList>
    </citation>
    <scope>NUCLEOTIDE SEQUENCE [LARGE SCALE GENOMIC DNA]</scope>
    <source>
        <strain>168</strain>
    </source>
</reference>
<reference key="3">
    <citation type="journal article" date="2009" name="Microbiology">
        <title>From a consortium sequence to a unified sequence: the Bacillus subtilis 168 reference genome a decade later.</title>
        <authorList>
            <person name="Barbe V."/>
            <person name="Cruveiller S."/>
            <person name="Kunst F."/>
            <person name="Lenoble P."/>
            <person name="Meurice G."/>
            <person name="Sekowska A."/>
            <person name="Vallenet D."/>
            <person name="Wang T."/>
            <person name="Moszer I."/>
            <person name="Medigue C."/>
            <person name="Danchin A."/>
        </authorList>
    </citation>
    <scope>SEQUENCE REVISION TO 32 AND 352-363</scope>
</reference>
<reference key="4">
    <citation type="journal article" date="1991" name="Gene">
        <title>Bacillus subtilis inositol dehydrogenase-encoding gene (idh): sequence and expression in Escherichia coli.</title>
        <authorList>
            <person name="Fujita Y."/>
            <person name="Shindo K."/>
            <person name="Miwa Y."/>
            <person name="Yoshida K."/>
        </authorList>
    </citation>
    <scope>NUCLEOTIDE SEQUENCE [GENOMIC DNA] OF 273-438</scope>
    <source>
        <strain>168 / 60015</strain>
    </source>
</reference>
<reference key="5">
    <citation type="journal article" date="2002" name="J. Bacteriol.">
        <title>Identification of two myo-inositol transporter genes of Bacillus subtilis.</title>
        <authorList>
            <person name="Yoshida K."/>
            <person name="Yamamoto Y."/>
            <person name="Omae K."/>
            <person name="Yamamoto M."/>
            <person name="Fujita Y."/>
        </authorList>
    </citation>
    <scope>FUNCTION</scope>
</reference>
<sequence>MGNTNGDSAFNKRTIAAALANYIDAGSIVAGSAGLSLWVSYLKLSDTQIGLLGALSANAISAAVGALLGGFLADKVGRKAVYTNSMLVYALGICLVLFGVNFPMLLSGYIIIGLSVGADITASWTIIAENAPKKNRARHCGVAQVAWAAGAVVVLLLSVLAGDLGLLGNKIVFAHLLVIALITYILRIRLPESDAWQTKNQPEEAQAEKPAVLNKTSYFDLLKPMYLKSILFLMGVYLVWNLAAGVMGFFMPYIYQQVGGVSANMANLLQMGLFIFTGLGVALIFMPFADKYRKTVFGIAAFMAVIGWTLFLLPVEGLPILLLFIVVIGINNGAGQQANYQLWASEIFPTQYRASAQGLMFFLVRISIGIWSLFVPMIITNFGIGTMAAILLGCVTASMIIGLLFAPNTSGKSLEQIQEELYGSPQSQVKKGTESKIM</sequence>
<comment type="function">
    <text evidence="2">Minor myo-inositol uptake transporter.</text>
</comment>
<comment type="pathway">
    <text>Polyol metabolism; myo-inositol degradation into acetyl-CoA.</text>
</comment>
<comment type="subcellular location">
    <subcellularLocation>
        <location evidence="3">Cell membrane</location>
        <topology evidence="3">Multi-pass membrane protein</topology>
    </subcellularLocation>
</comment>
<comment type="miscellaneous">
    <text>The growth-defect caused by the iolF inactivation was only observed in the iolT-null background.</text>
</comment>
<comment type="similarity">
    <text evidence="3">Belongs to the major facilitator superfamily. Sugar transporter (TC 2.A.1.1) family.</text>
</comment>
<protein>
    <recommendedName>
        <fullName>Minor myo-inositol transporter IolF</fullName>
    </recommendedName>
</protein>
<name>IOLF_BACSU</name>
<accession>P42417</accession>
<proteinExistence type="inferred from homology"/>
<keyword id="KW-1003">Cell membrane</keyword>
<keyword id="KW-0472">Membrane</keyword>
<keyword id="KW-1185">Reference proteome</keyword>
<keyword id="KW-0812">Transmembrane</keyword>
<keyword id="KW-1133">Transmembrane helix</keyword>
<keyword id="KW-0813">Transport</keyword>
<dbReference type="EMBL" id="D14399">
    <property type="protein sequence ID" value="BAA03295.1"/>
    <property type="molecule type" value="Genomic_DNA"/>
</dbReference>
<dbReference type="EMBL" id="AL009126">
    <property type="protein sequence ID" value="CAB16007.2"/>
    <property type="molecule type" value="Genomic_DNA"/>
</dbReference>
<dbReference type="EMBL" id="M76431">
    <property type="status" value="NOT_ANNOTATED_CDS"/>
    <property type="molecule type" value="Genomic_DNA"/>
</dbReference>
<dbReference type="PIR" id="F69645">
    <property type="entry name" value="F69645"/>
</dbReference>
<dbReference type="RefSeq" id="NP_391850.2">
    <property type="nucleotide sequence ID" value="NC_000964.3"/>
</dbReference>
<dbReference type="RefSeq" id="WP_003244597.1">
    <property type="nucleotide sequence ID" value="NZ_OZ025638.1"/>
</dbReference>
<dbReference type="SMR" id="P42417"/>
<dbReference type="FunCoup" id="P42417">
    <property type="interactions" value="34"/>
</dbReference>
<dbReference type="STRING" id="224308.BSU39710"/>
<dbReference type="TCDB" id="2.A.1.1.27">
    <property type="family name" value="the major facilitator superfamily (mfs)"/>
</dbReference>
<dbReference type="PaxDb" id="224308-BSU39710"/>
<dbReference type="EnsemblBacteria" id="CAB16007">
    <property type="protein sequence ID" value="CAB16007"/>
    <property type="gene ID" value="BSU_39710"/>
</dbReference>
<dbReference type="GeneID" id="937616"/>
<dbReference type="KEGG" id="bsu:BSU39710"/>
<dbReference type="PATRIC" id="fig|224308.179.peg.4296"/>
<dbReference type="eggNOG" id="COG2814">
    <property type="taxonomic scope" value="Bacteria"/>
</dbReference>
<dbReference type="InParanoid" id="P42417"/>
<dbReference type="OrthoDB" id="3252866at2"/>
<dbReference type="PhylomeDB" id="P42417"/>
<dbReference type="BioCyc" id="BSUB:BSU39710-MONOMER"/>
<dbReference type="UniPathway" id="UPA00076"/>
<dbReference type="Proteomes" id="UP000001570">
    <property type="component" value="Chromosome"/>
</dbReference>
<dbReference type="GO" id="GO:0016020">
    <property type="term" value="C:membrane"/>
    <property type="evidence" value="ECO:0000318"/>
    <property type="project" value="GO_Central"/>
</dbReference>
<dbReference type="GO" id="GO:0005886">
    <property type="term" value="C:plasma membrane"/>
    <property type="evidence" value="ECO:0007669"/>
    <property type="project" value="UniProtKB-SubCell"/>
</dbReference>
<dbReference type="GO" id="GO:0022857">
    <property type="term" value="F:transmembrane transporter activity"/>
    <property type="evidence" value="ECO:0000318"/>
    <property type="project" value="GO_Central"/>
</dbReference>
<dbReference type="GO" id="GO:0055085">
    <property type="term" value="P:transmembrane transport"/>
    <property type="evidence" value="ECO:0000318"/>
    <property type="project" value="GO_Central"/>
</dbReference>
<dbReference type="CDD" id="cd17316">
    <property type="entry name" value="MFS_SV2_like"/>
    <property type="match status" value="1"/>
</dbReference>
<dbReference type="Gene3D" id="1.20.1250.20">
    <property type="entry name" value="MFS general substrate transporter like domains"/>
    <property type="match status" value="1"/>
</dbReference>
<dbReference type="InterPro" id="IPR011701">
    <property type="entry name" value="MFS"/>
</dbReference>
<dbReference type="InterPro" id="IPR020846">
    <property type="entry name" value="MFS_dom"/>
</dbReference>
<dbReference type="InterPro" id="IPR036259">
    <property type="entry name" value="MFS_trans_sf"/>
</dbReference>
<dbReference type="InterPro" id="IPR005829">
    <property type="entry name" value="Sugar_transporter_CS"/>
</dbReference>
<dbReference type="PANTHER" id="PTHR23508">
    <property type="entry name" value="CARBOXYLIC ACID TRANSPORTER PROTEIN HOMOLOG"/>
    <property type="match status" value="1"/>
</dbReference>
<dbReference type="PANTHER" id="PTHR23508:SF10">
    <property type="entry name" value="CARBOXYLIC ACID TRANSPORTER PROTEIN HOMOLOG"/>
    <property type="match status" value="1"/>
</dbReference>
<dbReference type="Pfam" id="PF07690">
    <property type="entry name" value="MFS_1"/>
    <property type="match status" value="1"/>
</dbReference>
<dbReference type="SUPFAM" id="SSF103473">
    <property type="entry name" value="MFS general substrate transporter"/>
    <property type="match status" value="1"/>
</dbReference>
<dbReference type="PROSITE" id="PS50850">
    <property type="entry name" value="MFS"/>
    <property type="match status" value="1"/>
</dbReference>
<dbReference type="PROSITE" id="PS00216">
    <property type="entry name" value="SUGAR_TRANSPORT_1"/>
    <property type="match status" value="1"/>
</dbReference>
<dbReference type="PROSITE" id="PS00217">
    <property type="entry name" value="SUGAR_TRANSPORT_2"/>
    <property type="match status" value="1"/>
</dbReference>